<organism>
    <name type="scientific">Vibrio parahaemolyticus serotype O3:K6 (strain RIMD 2210633)</name>
    <dbReference type="NCBI Taxonomy" id="223926"/>
    <lineage>
        <taxon>Bacteria</taxon>
        <taxon>Pseudomonadati</taxon>
        <taxon>Pseudomonadota</taxon>
        <taxon>Gammaproteobacteria</taxon>
        <taxon>Vibrionales</taxon>
        <taxon>Vibrionaceae</taxon>
        <taxon>Vibrio</taxon>
    </lineage>
</organism>
<gene>
    <name type="ordered locus">VPA1482</name>
</gene>
<dbReference type="EC" id="7.-.-.-"/>
<dbReference type="EMBL" id="BA000032">
    <property type="protein sequence ID" value="BAC62825.1"/>
    <property type="molecule type" value="Genomic_DNA"/>
</dbReference>
<dbReference type="RefSeq" id="NP_800992.1">
    <property type="nucleotide sequence ID" value="NC_004605.1"/>
</dbReference>
<dbReference type="RefSeq" id="WP_005478313.1">
    <property type="nucleotide sequence ID" value="NC_004605.1"/>
</dbReference>
<dbReference type="SMR" id="Q87G35"/>
<dbReference type="GeneID" id="1192178"/>
<dbReference type="KEGG" id="vpa:VPA1482"/>
<dbReference type="PATRIC" id="fig|223926.6.peg.4408"/>
<dbReference type="eggNOG" id="COG1122">
    <property type="taxonomic scope" value="Bacteria"/>
</dbReference>
<dbReference type="HOGENOM" id="CLU_000604_86_7_6"/>
<dbReference type="Proteomes" id="UP000002493">
    <property type="component" value="Chromosome 2"/>
</dbReference>
<dbReference type="GO" id="GO:0043190">
    <property type="term" value="C:ATP-binding cassette (ABC) transporter complex"/>
    <property type="evidence" value="ECO:0007669"/>
    <property type="project" value="TreeGrafter"/>
</dbReference>
<dbReference type="GO" id="GO:0005524">
    <property type="term" value="F:ATP binding"/>
    <property type="evidence" value="ECO:0007669"/>
    <property type="project" value="UniProtKB-KW"/>
</dbReference>
<dbReference type="GO" id="GO:0016887">
    <property type="term" value="F:ATP hydrolysis activity"/>
    <property type="evidence" value="ECO:0007669"/>
    <property type="project" value="InterPro"/>
</dbReference>
<dbReference type="GO" id="GO:0042626">
    <property type="term" value="F:ATPase-coupled transmembrane transporter activity"/>
    <property type="evidence" value="ECO:0007669"/>
    <property type="project" value="TreeGrafter"/>
</dbReference>
<dbReference type="CDD" id="cd03225">
    <property type="entry name" value="ABC_cobalt_CbiO_domain1"/>
    <property type="match status" value="2"/>
</dbReference>
<dbReference type="FunFam" id="3.40.50.300:FF:001422">
    <property type="entry name" value="Cobalt ABC transporter ATP-binding protein"/>
    <property type="match status" value="1"/>
</dbReference>
<dbReference type="FunFam" id="3.40.50.300:FF:000224">
    <property type="entry name" value="Energy-coupling factor transporter ATP-binding protein EcfA"/>
    <property type="match status" value="1"/>
</dbReference>
<dbReference type="Gene3D" id="3.40.50.300">
    <property type="entry name" value="P-loop containing nucleotide triphosphate hydrolases"/>
    <property type="match status" value="2"/>
</dbReference>
<dbReference type="InterPro" id="IPR003593">
    <property type="entry name" value="AAA+_ATPase"/>
</dbReference>
<dbReference type="InterPro" id="IPR022216">
    <property type="entry name" value="ABC_Co_transporter"/>
</dbReference>
<dbReference type="InterPro" id="IPR003439">
    <property type="entry name" value="ABC_transporter-like_ATP-bd"/>
</dbReference>
<dbReference type="InterPro" id="IPR017871">
    <property type="entry name" value="ABC_transporter-like_CS"/>
</dbReference>
<dbReference type="InterPro" id="IPR015856">
    <property type="entry name" value="ABC_transpr_CbiO/EcfA_su"/>
</dbReference>
<dbReference type="InterPro" id="IPR050095">
    <property type="entry name" value="ECF_ABC_transporter_ATP-bd"/>
</dbReference>
<dbReference type="InterPro" id="IPR027417">
    <property type="entry name" value="P-loop_NTPase"/>
</dbReference>
<dbReference type="NCBIfam" id="NF010167">
    <property type="entry name" value="PRK13648.1"/>
    <property type="match status" value="2"/>
</dbReference>
<dbReference type="PANTHER" id="PTHR43553:SF26">
    <property type="entry name" value="ABC TRANSPORTER ATP-BINDING PROTEIN BC_2655-RELATED"/>
    <property type="match status" value="1"/>
</dbReference>
<dbReference type="PANTHER" id="PTHR43553">
    <property type="entry name" value="HEAVY METAL TRANSPORTER"/>
    <property type="match status" value="1"/>
</dbReference>
<dbReference type="Pfam" id="PF00005">
    <property type="entry name" value="ABC_tran"/>
    <property type="match status" value="2"/>
</dbReference>
<dbReference type="Pfam" id="PF12558">
    <property type="entry name" value="DUF3744"/>
    <property type="match status" value="1"/>
</dbReference>
<dbReference type="SMART" id="SM00382">
    <property type="entry name" value="AAA"/>
    <property type="match status" value="2"/>
</dbReference>
<dbReference type="SUPFAM" id="SSF52540">
    <property type="entry name" value="P-loop containing nucleoside triphosphate hydrolases"/>
    <property type="match status" value="2"/>
</dbReference>
<dbReference type="PROSITE" id="PS00211">
    <property type="entry name" value="ABC_TRANSPORTER_1"/>
    <property type="match status" value="2"/>
</dbReference>
<dbReference type="PROSITE" id="PS50893">
    <property type="entry name" value="ABC_TRANSPORTER_2"/>
    <property type="match status" value="2"/>
</dbReference>
<accession>Q87G35</accession>
<protein>
    <recommendedName>
        <fullName>Putative ABC transporter ATP-binding protein VPA1482</fullName>
        <ecNumber>7.-.-.-</ecNumber>
    </recommendedName>
</protein>
<keyword id="KW-0067">ATP-binding</keyword>
<keyword id="KW-0997">Cell inner membrane</keyword>
<keyword id="KW-1003">Cell membrane</keyword>
<keyword id="KW-0472">Membrane</keyword>
<keyword id="KW-0547">Nucleotide-binding</keyword>
<keyword id="KW-0677">Repeat</keyword>
<keyword id="KW-1278">Translocase</keyword>
<keyword id="KW-0813">Transport</keyword>
<reference key="1">
    <citation type="journal article" date="2003" name="Lancet">
        <title>Genome sequence of Vibrio parahaemolyticus: a pathogenic mechanism distinct from that of V. cholerae.</title>
        <authorList>
            <person name="Makino K."/>
            <person name="Oshima K."/>
            <person name="Kurokawa K."/>
            <person name="Yokoyama K."/>
            <person name="Uda T."/>
            <person name="Tagomori K."/>
            <person name="Iijima Y."/>
            <person name="Najima M."/>
            <person name="Nakano M."/>
            <person name="Yamashita A."/>
            <person name="Kubota Y."/>
            <person name="Kimura S."/>
            <person name="Yasunaga T."/>
            <person name="Honda T."/>
            <person name="Shinagawa H."/>
            <person name="Hattori M."/>
            <person name="Iida T."/>
        </authorList>
    </citation>
    <scope>NUCLEOTIDE SEQUENCE [LARGE SCALE GENOMIC DNA]</scope>
    <source>
        <strain>RIMD 2210633</strain>
    </source>
</reference>
<feature type="chain" id="PRO_0000092126" description="Putative ABC transporter ATP-binding protein VPA1482">
    <location>
        <begin position="1"/>
        <end position="579"/>
    </location>
</feature>
<feature type="domain" description="ABC transporter 1" evidence="2">
    <location>
        <begin position="3"/>
        <end position="244"/>
    </location>
</feature>
<feature type="domain" description="ABC transporter 2" evidence="2">
    <location>
        <begin position="299"/>
        <end position="533"/>
    </location>
</feature>
<feature type="binding site" evidence="2">
    <location>
        <begin position="37"/>
        <end position="44"/>
    </location>
    <ligand>
        <name>ATP</name>
        <dbReference type="ChEBI" id="CHEBI:30616"/>
        <label>1</label>
    </ligand>
</feature>
<feature type="binding site" evidence="2">
    <location>
        <begin position="332"/>
        <end position="339"/>
    </location>
    <ligand>
        <name>ATP</name>
        <dbReference type="ChEBI" id="CHEBI:30616"/>
        <label>2</label>
    </ligand>
</feature>
<sequence>MTIEFSNFSFRYESLDKPTLKNINLRIEKGEKIVIIGPSGSGKSTLGQCLNGLIPHAIKGETSGTLTIYGQDTAPFDMHQYTEQVGTVLQDTDSQFVGLSIGEDIAFALENQLTSNIDMYPLVKATAKMVDLEQMLDRSPHDLSGGQKQRVSLAGILVDDVDILLFDEPLAALDPKTGKKTIEIIDDLHRETGKTIVIIEHRLEDVLHRSVDRIILMESGEIIADTTPDEILASPLLEDYGIREPLYISALKEAGCAIEGDAKPSSLTTLPLEQYKPTVQAWFDGSTAQPPKTPAETLLEVRGLTYSYDGEKNALEDVSFDIKRGEFVSVLGKNGSGKSTITKLIMGVIEADSGSMSMNGQDLNELTIFERSQKVGVVMQNPNHMISHHMIFDEVAFGLRNRGIKEKQIEAKVLEVLELCGLSKYRHWPIEALSYGQKKRVTIASILVLEPELLILDEPTAGQDYRNYTSMLSFIEKLNRELGVTVMIISHDMHLVLEYTTRSIVIADSKLVADAPMTQVFSSPELLDQANLTTTSLFDLATKVGIEDTNGFMQHFINVEKAHRQQKSGEVNQPEKAVA</sequence>
<evidence type="ECO:0000250" key="1"/>
<evidence type="ECO:0000255" key="2">
    <source>
        <dbReference type="PROSITE-ProRule" id="PRU00434"/>
    </source>
</evidence>
<evidence type="ECO:0000305" key="3"/>
<proteinExistence type="inferred from homology"/>
<comment type="function">
    <text evidence="1">Probably part of an ABC transporter complex. Responsible for energy coupling to the transport system (By similarity).</text>
</comment>
<comment type="subcellular location">
    <subcellularLocation>
        <location evidence="1">Cell inner membrane</location>
        <topology evidence="1">Peripheral membrane protein</topology>
    </subcellularLocation>
</comment>
<comment type="similarity">
    <text evidence="3">Belongs to the ABC transporter superfamily.</text>
</comment>
<name>Y5482_VIBPA</name>